<accession>P49423</accession>
<accession>Q51920</accession>
<organism>
    <name type="scientific">Prochlorococcus marinus (strain SARG / CCMP1375 / SS120)</name>
    <dbReference type="NCBI Taxonomy" id="167539"/>
    <lineage>
        <taxon>Bacteria</taxon>
        <taxon>Bacillati</taxon>
        <taxon>Cyanobacteriota</taxon>
        <taxon>Cyanophyceae</taxon>
        <taxon>Synechococcales</taxon>
        <taxon>Prochlorococcaceae</taxon>
        <taxon>Prochlorococcus</taxon>
    </lineage>
</organism>
<sequence>MSTVPEISSAPFGRLLTAMVTPFDTAGAVDFALAARLARYLVDQGSDGLIVCGTTGESPTLSWEEQYQLLETVRNAVNGSAKVLAGTGSNSTSEAIHATAKAAEAGADGALVVVPYYNKPPQAGLESHFRAVAQAAPDLPLMLYNIPGRTGCSISPITVQRLMNCSNIVSFKAASGTTNEVTDLRIRCGSRLAIYSGDDGLLLPMLSVGAVGVVSVASHIVGMRLKAMIEAYFAGENSLALSHHEQLQPLFKALFATTNPIPVKAALELIGWPVGAPRSPLLPLENQMKNELMKTISALLQT</sequence>
<name>DAPA_PROMA</name>
<comment type="function">
    <text evidence="1">Catalyzes the condensation of (S)-aspartate-beta-semialdehyde [(S)-ASA] and pyruvate to 4-hydroxy-tetrahydrodipicolinate (HTPA).</text>
</comment>
<comment type="catalytic activity">
    <reaction evidence="1">
        <text>L-aspartate 4-semialdehyde + pyruvate = (2S,4S)-4-hydroxy-2,3,4,5-tetrahydrodipicolinate + H2O + H(+)</text>
        <dbReference type="Rhea" id="RHEA:34171"/>
        <dbReference type="ChEBI" id="CHEBI:15361"/>
        <dbReference type="ChEBI" id="CHEBI:15377"/>
        <dbReference type="ChEBI" id="CHEBI:15378"/>
        <dbReference type="ChEBI" id="CHEBI:67139"/>
        <dbReference type="ChEBI" id="CHEBI:537519"/>
        <dbReference type="EC" id="4.3.3.7"/>
    </reaction>
</comment>
<comment type="pathway">
    <text evidence="1">Amino-acid biosynthesis; L-lysine biosynthesis via DAP pathway; (S)-tetrahydrodipicolinate from L-aspartate: step 3/4.</text>
</comment>
<comment type="subunit">
    <text evidence="1">Homotetramer; dimer of dimers.</text>
</comment>
<comment type="subcellular location">
    <subcellularLocation>
        <location evidence="1">Cytoplasm</location>
    </subcellularLocation>
</comment>
<comment type="similarity">
    <text evidence="1">Belongs to the DapA family.</text>
</comment>
<comment type="caution">
    <text evidence="2">Was originally thought to be a dihydrodipicolinate synthase (DHDPS), catalyzing the condensation of (S)-aspartate-beta-semialdehyde [(S)-ASA] and pyruvate to dihydrodipicolinate (DHDP). However, it was shown in E.coli that the product of the enzymatic reaction is not dihydrodipicolinate but in fact (4S)-4-hydroxy-2,3,4,5-tetrahydro-(2S)-dipicolinic acid (HTPA), and that the consecutive dehydration reaction leading to DHDP is not spontaneous but catalyzed by DapB.</text>
</comment>
<keyword id="KW-0028">Amino-acid biosynthesis</keyword>
<keyword id="KW-0963">Cytoplasm</keyword>
<keyword id="KW-0220">Diaminopimelate biosynthesis</keyword>
<keyword id="KW-0456">Lyase</keyword>
<keyword id="KW-0457">Lysine biosynthesis</keyword>
<keyword id="KW-1185">Reference proteome</keyword>
<keyword id="KW-0704">Schiff base</keyword>
<protein>
    <recommendedName>
        <fullName evidence="1">4-hydroxy-tetrahydrodipicolinate synthase</fullName>
        <shortName evidence="1">HTPA synthase</shortName>
        <ecNumber evidence="1">4.3.3.7</ecNumber>
    </recommendedName>
</protein>
<gene>
    <name evidence="1" type="primary">dapA</name>
    <name type="ordered locus">Pro_1813</name>
</gene>
<proteinExistence type="inferred from homology"/>
<feature type="chain" id="PRO_0000103135" description="4-hydroxy-tetrahydrodipicolinate synthase">
    <location>
        <begin position="1"/>
        <end position="302"/>
    </location>
</feature>
<feature type="active site" description="Proton donor/acceptor" evidence="1">
    <location>
        <position position="144"/>
    </location>
</feature>
<feature type="active site" description="Schiff-base intermediate with substrate" evidence="1">
    <location>
        <position position="172"/>
    </location>
</feature>
<feature type="binding site" evidence="1">
    <location>
        <position position="55"/>
    </location>
    <ligand>
        <name>pyruvate</name>
        <dbReference type="ChEBI" id="CHEBI:15361"/>
    </ligand>
</feature>
<feature type="binding site" evidence="1">
    <location>
        <position position="214"/>
    </location>
    <ligand>
        <name>pyruvate</name>
        <dbReference type="ChEBI" id="CHEBI:15361"/>
    </ligand>
</feature>
<feature type="site" description="Part of a proton relay during catalysis" evidence="1">
    <location>
        <position position="54"/>
    </location>
</feature>
<feature type="site" description="Part of a proton relay during catalysis" evidence="1">
    <location>
        <position position="117"/>
    </location>
</feature>
<feature type="sequence conflict" description="In Ref. 1; CAA92211." evidence="2" ref="1">
    <original>T</original>
    <variation>P</variation>
    <location>
        <position position="3"/>
    </location>
</feature>
<feature type="sequence conflict" description="In Ref. 1; CAA92211." evidence="2" ref="1">
    <original>A</original>
    <variation>P</variation>
    <location>
        <position position="85"/>
    </location>
</feature>
<feature type="sequence conflict" description="In Ref. 1; CAA92211 and 3; CAA85785." evidence="2" ref="1 3">
    <original>L</original>
    <variation>P</variation>
    <location>
        <position position="202"/>
    </location>
</feature>
<reference key="1">
    <citation type="journal article" date="1995" name="Endocyt. Cell Res.">
        <title>Molecular cloning and characterization of a dihydrodipicolinate synthase (DHDPS) gene from the photoautotrophic prokaryote Prochlorococcus marinus CCMP 1375 (Prochlorophyta).</title>
        <authorList>
            <person name="Lorenz M."/>
            <person name="Boerner T."/>
            <person name="Hess W.R."/>
        </authorList>
    </citation>
    <scope>NUCLEOTIDE SEQUENCE [GENOMIC DNA]</scope>
    <source>
        <strain>SARG / CCMP1375 / SS120</strain>
    </source>
</reference>
<reference key="2">
    <citation type="journal article" date="2003" name="Proc. Natl. Acad. Sci. U.S.A.">
        <title>Genome sequence of the cyanobacterium Prochlorococcus marinus SS120, a nearly minimal oxyphototrophic genome.</title>
        <authorList>
            <person name="Dufresne A."/>
            <person name="Salanoubat M."/>
            <person name="Partensky F."/>
            <person name="Artiguenave F."/>
            <person name="Axmann I.M."/>
            <person name="Barbe V."/>
            <person name="Duprat S."/>
            <person name="Galperin M.Y."/>
            <person name="Koonin E.V."/>
            <person name="Le Gall F."/>
            <person name="Makarova K.S."/>
            <person name="Ostrowski M."/>
            <person name="Oztas S."/>
            <person name="Robert C."/>
            <person name="Rogozin I.B."/>
            <person name="Scanlan D.J."/>
            <person name="Tandeau de Marsac N."/>
            <person name="Weissenbach J."/>
            <person name="Wincker P."/>
            <person name="Wolf Y.I."/>
            <person name="Hess W.R."/>
        </authorList>
    </citation>
    <scope>NUCLEOTIDE SEQUENCE [LARGE SCALE GENOMIC DNA]</scope>
    <source>
        <strain>SARG / CCMP1375 / SS120</strain>
    </source>
</reference>
<reference key="3">
    <citation type="submission" date="1994-09" db="EMBL/GenBank/DDBJ databases">
        <title>Sequencing and determination of copy numbers of RAPD fragments amplified by repetitive primers in the prokaryote Prochlorococcus marinus.</title>
        <authorList>
            <person name="Lorenz M."/>
            <person name="Partensky F."/>
            <person name="Boerner T."/>
            <person name="Hess W.R."/>
        </authorList>
    </citation>
    <scope>NUCLEOTIDE SEQUENCE [GENOMIC DNA] OF 85-302</scope>
    <source>
        <strain>SARG / CCMP1375 / SS120</strain>
    </source>
</reference>
<evidence type="ECO:0000255" key="1">
    <source>
        <dbReference type="HAMAP-Rule" id="MF_00418"/>
    </source>
</evidence>
<evidence type="ECO:0000305" key="2"/>
<dbReference type="EC" id="4.3.3.7" evidence="1"/>
<dbReference type="EMBL" id="Z68126">
    <property type="protein sequence ID" value="CAA92211.1"/>
    <property type="molecule type" value="Genomic_DNA"/>
</dbReference>
<dbReference type="EMBL" id="AE017126">
    <property type="protein sequence ID" value="AAQ00857.1"/>
    <property type="molecule type" value="Genomic_DNA"/>
</dbReference>
<dbReference type="EMBL" id="Z37733">
    <property type="protein sequence ID" value="CAA85785.1"/>
    <property type="molecule type" value="Genomic_DNA"/>
</dbReference>
<dbReference type="PIR" id="S51751">
    <property type="entry name" value="S51751"/>
</dbReference>
<dbReference type="RefSeq" id="NP_876204.1">
    <property type="nucleotide sequence ID" value="NC_005042.1"/>
</dbReference>
<dbReference type="RefSeq" id="WP_011125962.1">
    <property type="nucleotide sequence ID" value="NC_005042.1"/>
</dbReference>
<dbReference type="SMR" id="P49423"/>
<dbReference type="STRING" id="167539.Pro_1813"/>
<dbReference type="EnsemblBacteria" id="AAQ00857">
    <property type="protein sequence ID" value="AAQ00857"/>
    <property type="gene ID" value="Pro_1813"/>
</dbReference>
<dbReference type="KEGG" id="pma:Pro_1813"/>
<dbReference type="PATRIC" id="fig|167539.5.peg.1915"/>
<dbReference type="eggNOG" id="COG0329">
    <property type="taxonomic scope" value="Bacteria"/>
</dbReference>
<dbReference type="HOGENOM" id="CLU_049343_7_1_3"/>
<dbReference type="OrthoDB" id="9782828at2"/>
<dbReference type="UniPathway" id="UPA00034">
    <property type="reaction ID" value="UER00017"/>
</dbReference>
<dbReference type="Proteomes" id="UP000001420">
    <property type="component" value="Chromosome"/>
</dbReference>
<dbReference type="GO" id="GO:0005829">
    <property type="term" value="C:cytosol"/>
    <property type="evidence" value="ECO:0007669"/>
    <property type="project" value="TreeGrafter"/>
</dbReference>
<dbReference type="GO" id="GO:0008840">
    <property type="term" value="F:4-hydroxy-tetrahydrodipicolinate synthase activity"/>
    <property type="evidence" value="ECO:0007669"/>
    <property type="project" value="UniProtKB-UniRule"/>
</dbReference>
<dbReference type="GO" id="GO:0019877">
    <property type="term" value="P:diaminopimelate biosynthetic process"/>
    <property type="evidence" value="ECO:0007669"/>
    <property type="project" value="UniProtKB-UniRule"/>
</dbReference>
<dbReference type="GO" id="GO:0009089">
    <property type="term" value="P:lysine biosynthetic process via diaminopimelate"/>
    <property type="evidence" value="ECO:0007669"/>
    <property type="project" value="UniProtKB-UniRule"/>
</dbReference>
<dbReference type="CDD" id="cd00950">
    <property type="entry name" value="DHDPS"/>
    <property type="match status" value="1"/>
</dbReference>
<dbReference type="Gene3D" id="3.20.20.70">
    <property type="entry name" value="Aldolase class I"/>
    <property type="match status" value="1"/>
</dbReference>
<dbReference type="HAMAP" id="MF_00418">
    <property type="entry name" value="DapA"/>
    <property type="match status" value="1"/>
</dbReference>
<dbReference type="InterPro" id="IPR013785">
    <property type="entry name" value="Aldolase_TIM"/>
</dbReference>
<dbReference type="InterPro" id="IPR005263">
    <property type="entry name" value="DapA"/>
</dbReference>
<dbReference type="InterPro" id="IPR002220">
    <property type="entry name" value="DapA-like"/>
</dbReference>
<dbReference type="InterPro" id="IPR020625">
    <property type="entry name" value="Schiff_base-form_aldolases_AS"/>
</dbReference>
<dbReference type="InterPro" id="IPR020624">
    <property type="entry name" value="Schiff_base-form_aldolases_CS"/>
</dbReference>
<dbReference type="NCBIfam" id="TIGR00674">
    <property type="entry name" value="dapA"/>
    <property type="match status" value="1"/>
</dbReference>
<dbReference type="PANTHER" id="PTHR12128:SF66">
    <property type="entry name" value="4-HYDROXY-2-OXOGLUTARATE ALDOLASE, MITOCHONDRIAL"/>
    <property type="match status" value="1"/>
</dbReference>
<dbReference type="PANTHER" id="PTHR12128">
    <property type="entry name" value="DIHYDRODIPICOLINATE SYNTHASE"/>
    <property type="match status" value="1"/>
</dbReference>
<dbReference type="Pfam" id="PF00701">
    <property type="entry name" value="DHDPS"/>
    <property type="match status" value="1"/>
</dbReference>
<dbReference type="PIRSF" id="PIRSF001365">
    <property type="entry name" value="DHDPS"/>
    <property type="match status" value="1"/>
</dbReference>
<dbReference type="PRINTS" id="PR00146">
    <property type="entry name" value="DHPICSNTHASE"/>
</dbReference>
<dbReference type="SMART" id="SM01130">
    <property type="entry name" value="DHDPS"/>
    <property type="match status" value="1"/>
</dbReference>
<dbReference type="SUPFAM" id="SSF51569">
    <property type="entry name" value="Aldolase"/>
    <property type="match status" value="1"/>
</dbReference>
<dbReference type="PROSITE" id="PS00665">
    <property type="entry name" value="DHDPS_1"/>
    <property type="match status" value="1"/>
</dbReference>
<dbReference type="PROSITE" id="PS00666">
    <property type="entry name" value="DHDPS_2"/>
    <property type="match status" value="1"/>
</dbReference>